<feature type="chain" id="PRO_1000123276" description="Phosphopantetheine adenylyltransferase">
    <location>
        <begin position="1"/>
        <end position="161"/>
    </location>
</feature>
<feature type="binding site" evidence="1">
    <location>
        <begin position="9"/>
        <end position="10"/>
    </location>
    <ligand>
        <name>ATP</name>
        <dbReference type="ChEBI" id="CHEBI:30616"/>
    </ligand>
</feature>
<feature type="binding site" evidence="1">
    <location>
        <position position="9"/>
    </location>
    <ligand>
        <name>substrate</name>
    </ligand>
</feature>
<feature type="binding site" evidence="1">
    <location>
        <position position="17"/>
    </location>
    <ligand>
        <name>ATP</name>
        <dbReference type="ChEBI" id="CHEBI:30616"/>
    </ligand>
</feature>
<feature type="binding site" evidence="1">
    <location>
        <position position="41"/>
    </location>
    <ligand>
        <name>substrate</name>
    </ligand>
</feature>
<feature type="binding site" evidence="1">
    <location>
        <position position="73"/>
    </location>
    <ligand>
        <name>substrate</name>
    </ligand>
</feature>
<feature type="binding site" evidence="1">
    <location>
        <position position="87"/>
    </location>
    <ligand>
        <name>substrate</name>
    </ligand>
</feature>
<feature type="binding site" evidence="1">
    <location>
        <begin position="88"/>
        <end position="90"/>
    </location>
    <ligand>
        <name>ATP</name>
        <dbReference type="ChEBI" id="CHEBI:30616"/>
    </ligand>
</feature>
<feature type="binding site" evidence="1">
    <location>
        <position position="98"/>
    </location>
    <ligand>
        <name>ATP</name>
        <dbReference type="ChEBI" id="CHEBI:30616"/>
    </ligand>
</feature>
<feature type="binding site" evidence="1">
    <location>
        <begin position="123"/>
        <end position="129"/>
    </location>
    <ligand>
        <name>ATP</name>
        <dbReference type="ChEBI" id="CHEBI:30616"/>
    </ligand>
</feature>
<feature type="site" description="Transition state stabilizer" evidence="1">
    <location>
        <position position="17"/>
    </location>
</feature>
<organism>
    <name type="scientific">Chloroflexus aggregans (strain MD-66 / DSM 9485)</name>
    <dbReference type="NCBI Taxonomy" id="326427"/>
    <lineage>
        <taxon>Bacteria</taxon>
        <taxon>Bacillati</taxon>
        <taxon>Chloroflexota</taxon>
        <taxon>Chloroflexia</taxon>
        <taxon>Chloroflexales</taxon>
        <taxon>Chloroflexineae</taxon>
        <taxon>Chloroflexaceae</taxon>
        <taxon>Chloroflexus</taxon>
    </lineage>
</organism>
<dbReference type="EC" id="2.7.7.3" evidence="1"/>
<dbReference type="EMBL" id="CP001337">
    <property type="protein sequence ID" value="ACL25851.1"/>
    <property type="molecule type" value="Genomic_DNA"/>
</dbReference>
<dbReference type="RefSeq" id="WP_015941707.1">
    <property type="nucleotide sequence ID" value="NC_011831.1"/>
</dbReference>
<dbReference type="SMR" id="B8G6P2"/>
<dbReference type="STRING" id="326427.Cagg_2991"/>
<dbReference type="KEGG" id="cag:Cagg_2991"/>
<dbReference type="eggNOG" id="COG0669">
    <property type="taxonomic scope" value="Bacteria"/>
</dbReference>
<dbReference type="HOGENOM" id="CLU_100149_1_1_0"/>
<dbReference type="OrthoDB" id="9806661at2"/>
<dbReference type="UniPathway" id="UPA00241">
    <property type="reaction ID" value="UER00355"/>
</dbReference>
<dbReference type="Proteomes" id="UP000002508">
    <property type="component" value="Chromosome"/>
</dbReference>
<dbReference type="GO" id="GO:0005737">
    <property type="term" value="C:cytoplasm"/>
    <property type="evidence" value="ECO:0007669"/>
    <property type="project" value="UniProtKB-SubCell"/>
</dbReference>
<dbReference type="GO" id="GO:0005524">
    <property type="term" value="F:ATP binding"/>
    <property type="evidence" value="ECO:0007669"/>
    <property type="project" value="UniProtKB-KW"/>
</dbReference>
<dbReference type="GO" id="GO:0004595">
    <property type="term" value="F:pantetheine-phosphate adenylyltransferase activity"/>
    <property type="evidence" value="ECO:0007669"/>
    <property type="project" value="UniProtKB-UniRule"/>
</dbReference>
<dbReference type="GO" id="GO:0015937">
    <property type="term" value="P:coenzyme A biosynthetic process"/>
    <property type="evidence" value="ECO:0007669"/>
    <property type="project" value="UniProtKB-UniRule"/>
</dbReference>
<dbReference type="CDD" id="cd02163">
    <property type="entry name" value="PPAT"/>
    <property type="match status" value="1"/>
</dbReference>
<dbReference type="Gene3D" id="3.40.50.620">
    <property type="entry name" value="HUPs"/>
    <property type="match status" value="1"/>
</dbReference>
<dbReference type="HAMAP" id="MF_00151">
    <property type="entry name" value="PPAT_bact"/>
    <property type="match status" value="1"/>
</dbReference>
<dbReference type="InterPro" id="IPR004821">
    <property type="entry name" value="Cyt_trans-like"/>
</dbReference>
<dbReference type="InterPro" id="IPR001980">
    <property type="entry name" value="PPAT"/>
</dbReference>
<dbReference type="InterPro" id="IPR014729">
    <property type="entry name" value="Rossmann-like_a/b/a_fold"/>
</dbReference>
<dbReference type="NCBIfam" id="TIGR01510">
    <property type="entry name" value="coaD_prev_kdtB"/>
    <property type="match status" value="1"/>
</dbReference>
<dbReference type="NCBIfam" id="TIGR00125">
    <property type="entry name" value="cyt_tran_rel"/>
    <property type="match status" value="1"/>
</dbReference>
<dbReference type="PANTHER" id="PTHR21342">
    <property type="entry name" value="PHOSPHOPANTETHEINE ADENYLYLTRANSFERASE"/>
    <property type="match status" value="1"/>
</dbReference>
<dbReference type="PANTHER" id="PTHR21342:SF1">
    <property type="entry name" value="PHOSPHOPANTETHEINE ADENYLYLTRANSFERASE"/>
    <property type="match status" value="1"/>
</dbReference>
<dbReference type="Pfam" id="PF01467">
    <property type="entry name" value="CTP_transf_like"/>
    <property type="match status" value="1"/>
</dbReference>
<dbReference type="PRINTS" id="PR01020">
    <property type="entry name" value="LPSBIOSNTHSS"/>
</dbReference>
<dbReference type="SUPFAM" id="SSF52374">
    <property type="entry name" value="Nucleotidylyl transferase"/>
    <property type="match status" value="1"/>
</dbReference>
<name>COAD_CHLAD</name>
<protein>
    <recommendedName>
        <fullName evidence="1">Phosphopantetheine adenylyltransferase</fullName>
        <ecNumber evidence="1">2.7.7.3</ecNumber>
    </recommendedName>
    <alternativeName>
        <fullName evidence="1">Dephospho-CoA pyrophosphorylase</fullName>
    </alternativeName>
    <alternativeName>
        <fullName evidence="1">Pantetheine-phosphate adenylyltransferase</fullName>
        <shortName evidence="1">PPAT</shortName>
    </alternativeName>
</protein>
<sequence>MRIAIYPGSFDPVTYAHLDIARRATRIFDRVIMAVFDRPQKRLLFSTEERLHLLRTATADLDHVEAMSYNTLTVEFARQVGACAIVRGLRAGSDFEAEFQMAQVNQTIDPGIEVVVLMAGRPFAHISSTAVREMASLGRDPVEFTPPVVVAALREKFAQRG</sequence>
<keyword id="KW-0067">ATP-binding</keyword>
<keyword id="KW-0173">Coenzyme A biosynthesis</keyword>
<keyword id="KW-0963">Cytoplasm</keyword>
<keyword id="KW-0460">Magnesium</keyword>
<keyword id="KW-0547">Nucleotide-binding</keyword>
<keyword id="KW-0548">Nucleotidyltransferase</keyword>
<keyword id="KW-0808">Transferase</keyword>
<accession>B8G6P2</accession>
<evidence type="ECO:0000255" key="1">
    <source>
        <dbReference type="HAMAP-Rule" id="MF_00151"/>
    </source>
</evidence>
<proteinExistence type="inferred from homology"/>
<gene>
    <name evidence="1" type="primary">coaD</name>
    <name type="ordered locus">Cagg_2991</name>
</gene>
<reference key="1">
    <citation type="submission" date="2008-12" db="EMBL/GenBank/DDBJ databases">
        <title>Complete sequence of Chloroflexus aggregans DSM 9485.</title>
        <authorList>
            <consortium name="US DOE Joint Genome Institute"/>
            <person name="Lucas S."/>
            <person name="Copeland A."/>
            <person name="Lapidus A."/>
            <person name="Glavina del Rio T."/>
            <person name="Dalin E."/>
            <person name="Tice H."/>
            <person name="Pitluck S."/>
            <person name="Foster B."/>
            <person name="Larimer F."/>
            <person name="Land M."/>
            <person name="Hauser L."/>
            <person name="Kyrpides N."/>
            <person name="Mikhailova N."/>
            <person name="Bryant D.A."/>
            <person name="Richardson P."/>
        </authorList>
    </citation>
    <scope>NUCLEOTIDE SEQUENCE [LARGE SCALE GENOMIC DNA]</scope>
    <source>
        <strain>MD-66 / DSM 9485</strain>
    </source>
</reference>
<comment type="function">
    <text evidence="1">Reversibly transfers an adenylyl group from ATP to 4'-phosphopantetheine, yielding dephospho-CoA (dPCoA) and pyrophosphate.</text>
</comment>
<comment type="catalytic activity">
    <reaction evidence="1">
        <text>(R)-4'-phosphopantetheine + ATP + H(+) = 3'-dephospho-CoA + diphosphate</text>
        <dbReference type="Rhea" id="RHEA:19801"/>
        <dbReference type="ChEBI" id="CHEBI:15378"/>
        <dbReference type="ChEBI" id="CHEBI:30616"/>
        <dbReference type="ChEBI" id="CHEBI:33019"/>
        <dbReference type="ChEBI" id="CHEBI:57328"/>
        <dbReference type="ChEBI" id="CHEBI:61723"/>
        <dbReference type="EC" id="2.7.7.3"/>
    </reaction>
</comment>
<comment type="cofactor">
    <cofactor evidence="1">
        <name>Mg(2+)</name>
        <dbReference type="ChEBI" id="CHEBI:18420"/>
    </cofactor>
</comment>
<comment type="pathway">
    <text evidence="1">Cofactor biosynthesis; coenzyme A biosynthesis; CoA from (R)-pantothenate: step 4/5.</text>
</comment>
<comment type="subunit">
    <text evidence="1">Homohexamer.</text>
</comment>
<comment type="subcellular location">
    <subcellularLocation>
        <location evidence="1">Cytoplasm</location>
    </subcellularLocation>
</comment>
<comment type="similarity">
    <text evidence="1">Belongs to the bacterial CoaD family.</text>
</comment>